<dbReference type="EMBL" id="AK003688">
    <property type="protein sequence ID" value="BAC25047.1"/>
    <property type="molecule type" value="mRNA"/>
</dbReference>
<dbReference type="EMBL" id="AK011643">
    <property type="protein sequence ID" value="BAC25341.1"/>
    <property type="molecule type" value="mRNA"/>
</dbReference>
<dbReference type="EMBL" id="AK013073">
    <property type="protein sequence ID" value="BAC25389.1"/>
    <property type="molecule type" value="mRNA"/>
</dbReference>
<dbReference type="EMBL" id="AK077902">
    <property type="protein sequence ID" value="BAC37054.1"/>
    <property type="molecule type" value="mRNA"/>
</dbReference>
<dbReference type="EMBL" id="BC002240">
    <property type="protein sequence ID" value="AAH02240.1"/>
    <property type="molecule type" value="mRNA"/>
</dbReference>
<dbReference type="CCDS" id="CCDS28970.1"/>
<dbReference type="RefSeq" id="NP_001139694.1">
    <property type="nucleotide sequence ID" value="NM_001146222.1"/>
</dbReference>
<dbReference type="RefSeq" id="NP_001139695.1">
    <property type="nucleotide sequence ID" value="NM_001146223.1"/>
</dbReference>
<dbReference type="RefSeq" id="NP_001139696.1">
    <property type="nucleotide sequence ID" value="NM_001146224.1"/>
</dbReference>
<dbReference type="RefSeq" id="NP_077746.3">
    <property type="nucleotide sequence ID" value="NM_024428.4"/>
</dbReference>
<dbReference type="SMR" id="Q99LT0"/>
<dbReference type="BioGRID" id="211374">
    <property type="interactions" value="23"/>
</dbReference>
<dbReference type="DIP" id="DIP-61810N"/>
<dbReference type="FunCoup" id="Q99LT0">
    <property type="interactions" value="1697"/>
</dbReference>
<dbReference type="IntAct" id="Q99LT0">
    <property type="interactions" value="4"/>
</dbReference>
<dbReference type="STRING" id="10090.ENSMUSP00000126702"/>
<dbReference type="iPTMnet" id="Q99LT0"/>
<dbReference type="PhosphoSitePlus" id="Q99LT0"/>
<dbReference type="jPOST" id="Q99LT0"/>
<dbReference type="PaxDb" id="10090-ENSMUSP00000126702"/>
<dbReference type="PeptideAtlas" id="Q99LT0"/>
<dbReference type="ProteomicsDB" id="277391"/>
<dbReference type="Pumba" id="Q99LT0"/>
<dbReference type="TopDownProteomics" id="Q99LT0"/>
<dbReference type="Antibodypedia" id="51686">
    <property type="antibodies" value="65 antibodies from 17 providers"/>
</dbReference>
<dbReference type="DNASU" id="66310"/>
<dbReference type="Ensembl" id="ENSMUST00000112571.5">
    <property type="protein sequence ID" value="ENSMUSP00000108190.4"/>
    <property type="gene ID" value="ENSMUSG00000024067.15"/>
</dbReference>
<dbReference type="Ensembl" id="ENSMUST00000164832.9">
    <property type="protein sequence ID" value="ENSMUSP00000126702.2"/>
    <property type="gene ID" value="ENSMUSG00000024067.15"/>
</dbReference>
<dbReference type="Ensembl" id="ENSMUST00000232687.2">
    <property type="protein sequence ID" value="ENSMUSP00000156830.2"/>
    <property type="gene ID" value="ENSMUSG00000024067.15"/>
</dbReference>
<dbReference type="Ensembl" id="ENSMUST00000233581.2">
    <property type="protein sequence ID" value="ENSMUSP00000156795.2"/>
    <property type="gene ID" value="ENSMUSG00000024067.15"/>
</dbReference>
<dbReference type="GeneID" id="66310"/>
<dbReference type="KEGG" id="mmu:66310"/>
<dbReference type="UCSC" id="uc008dnw.2">
    <property type="organism name" value="mouse"/>
</dbReference>
<dbReference type="AGR" id="MGI:1913560"/>
<dbReference type="CTD" id="84661"/>
<dbReference type="MGI" id="MGI:1913560">
    <property type="gene designation" value="Dpy30"/>
</dbReference>
<dbReference type="VEuPathDB" id="HostDB:ENSMUSG00000024067"/>
<dbReference type="eggNOG" id="KOG4109">
    <property type="taxonomic scope" value="Eukaryota"/>
</dbReference>
<dbReference type="GeneTree" id="ENSGT00390000008808"/>
<dbReference type="HOGENOM" id="CLU_135823_3_1_1"/>
<dbReference type="InParanoid" id="Q99LT0"/>
<dbReference type="OMA" id="INYLAAY"/>
<dbReference type="OrthoDB" id="417678at2759"/>
<dbReference type="PhylomeDB" id="Q99LT0"/>
<dbReference type="BioGRID-ORCS" id="66310">
    <property type="hits" value="15 hits in 79 CRISPR screens"/>
</dbReference>
<dbReference type="ChiTaRS" id="Dpy30">
    <property type="organism name" value="mouse"/>
</dbReference>
<dbReference type="PRO" id="PR:Q99LT0"/>
<dbReference type="Proteomes" id="UP000000589">
    <property type="component" value="Chromosome 17"/>
</dbReference>
<dbReference type="RNAct" id="Q99LT0">
    <property type="molecule type" value="protein"/>
</dbReference>
<dbReference type="Bgee" id="ENSMUSG00000024067">
    <property type="expression patterns" value="Expressed in urogenital fold and 278 other cell types or tissues"/>
</dbReference>
<dbReference type="ExpressionAtlas" id="Q99LT0">
    <property type="expression patterns" value="baseline and differential"/>
</dbReference>
<dbReference type="GO" id="GO:0035097">
    <property type="term" value="C:histone methyltransferase complex"/>
    <property type="evidence" value="ECO:0000250"/>
    <property type="project" value="UniProtKB"/>
</dbReference>
<dbReference type="GO" id="GO:0071339">
    <property type="term" value="C:MLL1 complex"/>
    <property type="evidence" value="ECO:0007669"/>
    <property type="project" value="Ensembl"/>
</dbReference>
<dbReference type="GO" id="GO:0044666">
    <property type="term" value="C:MLL3/4 complex"/>
    <property type="evidence" value="ECO:0007669"/>
    <property type="project" value="Ensembl"/>
</dbReference>
<dbReference type="GO" id="GO:0005654">
    <property type="term" value="C:nucleoplasm"/>
    <property type="evidence" value="ECO:0000304"/>
    <property type="project" value="Reactome"/>
</dbReference>
<dbReference type="GO" id="GO:0005634">
    <property type="term" value="C:nucleus"/>
    <property type="evidence" value="ECO:0000250"/>
    <property type="project" value="UniProtKB"/>
</dbReference>
<dbReference type="GO" id="GO:0048188">
    <property type="term" value="C:Set1C/COMPASS complex"/>
    <property type="evidence" value="ECO:0000250"/>
    <property type="project" value="UniProtKB"/>
</dbReference>
<dbReference type="GO" id="GO:0005802">
    <property type="term" value="C:trans-Golgi network"/>
    <property type="evidence" value="ECO:0000250"/>
    <property type="project" value="UniProtKB"/>
</dbReference>
<dbReference type="GO" id="GO:0042803">
    <property type="term" value="F:protein homodimerization activity"/>
    <property type="evidence" value="ECO:0007669"/>
    <property type="project" value="Ensembl"/>
</dbReference>
<dbReference type="GO" id="GO:0016197">
    <property type="term" value="P:endosomal transport"/>
    <property type="evidence" value="ECO:0000250"/>
    <property type="project" value="UniProtKB"/>
</dbReference>
<dbReference type="GO" id="GO:0045815">
    <property type="term" value="P:transcription initiation-coupled chromatin remodeling"/>
    <property type="evidence" value="ECO:0000250"/>
    <property type="project" value="UniProtKB"/>
</dbReference>
<dbReference type="CDD" id="cd22965">
    <property type="entry name" value="DD_DPY30_SDC1"/>
    <property type="match status" value="1"/>
</dbReference>
<dbReference type="FunFam" id="1.20.890.10:FF:000003">
    <property type="entry name" value="protein dpy-30 homolog"/>
    <property type="match status" value="1"/>
</dbReference>
<dbReference type="Gene3D" id="1.20.890.10">
    <property type="entry name" value="cAMP-dependent protein kinase regulatory subunit, dimerization-anchoring domain"/>
    <property type="match status" value="1"/>
</dbReference>
<dbReference type="InterPro" id="IPR007858">
    <property type="entry name" value="Dpy-30_motif"/>
</dbReference>
<dbReference type="InterPro" id="IPR049629">
    <property type="entry name" value="DPY30_SDC1_DD"/>
</dbReference>
<dbReference type="InterPro" id="IPR037856">
    <property type="entry name" value="Sdc1/DPY30"/>
</dbReference>
<dbReference type="PANTHER" id="PTHR23356:SF16">
    <property type="entry name" value="DPY30 DOMAIN CONTAINING 2"/>
    <property type="match status" value="1"/>
</dbReference>
<dbReference type="PANTHER" id="PTHR23356">
    <property type="entry name" value="DPY30-RELATED"/>
    <property type="match status" value="1"/>
</dbReference>
<dbReference type="Pfam" id="PF05186">
    <property type="entry name" value="Dpy-30"/>
    <property type="match status" value="1"/>
</dbReference>
<gene>
    <name type="primary">Dpy30</name>
</gene>
<organism>
    <name type="scientific">Mus musculus</name>
    <name type="common">Mouse</name>
    <dbReference type="NCBI Taxonomy" id="10090"/>
    <lineage>
        <taxon>Eukaryota</taxon>
        <taxon>Metazoa</taxon>
        <taxon>Chordata</taxon>
        <taxon>Craniata</taxon>
        <taxon>Vertebrata</taxon>
        <taxon>Euteleostomi</taxon>
        <taxon>Mammalia</taxon>
        <taxon>Eutheria</taxon>
        <taxon>Euarchontoglires</taxon>
        <taxon>Glires</taxon>
        <taxon>Rodentia</taxon>
        <taxon>Myomorpha</taxon>
        <taxon>Muroidea</taxon>
        <taxon>Muridae</taxon>
        <taxon>Murinae</taxon>
        <taxon>Mus</taxon>
        <taxon>Mus</taxon>
    </lineage>
</organism>
<reference key="1">
    <citation type="journal article" date="2005" name="Science">
        <title>The transcriptional landscape of the mammalian genome.</title>
        <authorList>
            <person name="Carninci P."/>
            <person name="Kasukawa T."/>
            <person name="Katayama S."/>
            <person name="Gough J."/>
            <person name="Frith M.C."/>
            <person name="Maeda N."/>
            <person name="Oyama R."/>
            <person name="Ravasi T."/>
            <person name="Lenhard B."/>
            <person name="Wells C."/>
            <person name="Kodzius R."/>
            <person name="Shimokawa K."/>
            <person name="Bajic V.B."/>
            <person name="Brenner S.E."/>
            <person name="Batalov S."/>
            <person name="Forrest A.R."/>
            <person name="Zavolan M."/>
            <person name="Davis M.J."/>
            <person name="Wilming L.G."/>
            <person name="Aidinis V."/>
            <person name="Allen J.E."/>
            <person name="Ambesi-Impiombato A."/>
            <person name="Apweiler R."/>
            <person name="Aturaliya R.N."/>
            <person name="Bailey T.L."/>
            <person name="Bansal M."/>
            <person name="Baxter L."/>
            <person name="Beisel K.W."/>
            <person name="Bersano T."/>
            <person name="Bono H."/>
            <person name="Chalk A.M."/>
            <person name="Chiu K.P."/>
            <person name="Choudhary V."/>
            <person name="Christoffels A."/>
            <person name="Clutterbuck D.R."/>
            <person name="Crowe M.L."/>
            <person name="Dalla E."/>
            <person name="Dalrymple B.P."/>
            <person name="de Bono B."/>
            <person name="Della Gatta G."/>
            <person name="di Bernardo D."/>
            <person name="Down T."/>
            <person name="Engstrom P."/>
            <person name="Fagiolini M."/>
            <person name="Faulkner G."/>
            <person name="Fletcher C.F."/>
            <person name="Fukushima T."/>
            <person name="Furuno M."/>
            <person name="Futaki S."/>
            <person name="Gariboldi M."/>
            <person name="Georgii-Hemming P."/>
            <person name="Gingeras T.R."/>
            <person name="Gojobori T."/>
            <person name="Green R.E."/>
            <person name="Gustincich S."/>
            <person name="Harbers M."/>
            <person name="Hayashi Y."/>
            <person name="Hensch T.K."/>
            <person name="Hirokawa N."/>
            <person name="Hill D."/>
            <person name="Huminiecki L."/>
            <person name="Iacono M."/>
            <person name="Ikeo K."/>
            <person name="Iwama A."/>
            <person name="Ishikawa T."/>
            <person name="Jakt M."/>
            <person name="Kanapin A."/>
            <person name="Katoh M."/>
            <person name="Kawasawa Y."/>
            <person name="Kelso J."/>
            <person name="Kitamura H."/>
            <person name="Kitano H."/>
            <person name="Kollias G."/>
            <person name="Krishnan S.P."/>
            <person name="Kruger A."/>
            <person name="Kummerfeld S.K."/>
            <person name="Kurochkin I.V."/>
            <person name="Lareau L.F."/>
            <person name="Lazarevic D."/>
            <person name="Lipovich L."/>
            <person name="Liu J."/>
            <person name="Liuni S."/>
            <person name="McWilliam S."/>
            <person name="Madan Babu M."/>
            <person name="Madera M."/>
            <person name="Marchionni L."/>
            <person name="Matsuda H."/>
            <person name="Matsuzawa S."/>
            <person name="Miki H."/>
            <person name="Mignone F."/>
            <person name="Miyake S."/>
            <person name="Morris K."/>
            <person name="Mottagui-Tabar S."/>
            <person name="Mulder N."/>
            <person name="Nakano N."/>
            <person name="Nakauchi H."/>
            <person name="Ng P."/>
            <person name="Nilsson R."/>
            <person name="Nishiguchi S."/>
            <person name="Nishikawa S."/>
            <person name="Nori F."/>
            <person name="Ohara O."/>
            <person name="Okazaki Y."/>
            <person name="Orlando V."/>
            <person name="Pang K.C."/>
            <person name="Pavan W.J."/>
            <person name="Pavesi G."/>
            <person name="Pesole G."/>
            <person name="Petrovsky N."/>
            <person name="Piazza S."/>
            <person name="Reed J."/>
            <person name="Reid J.F."/>
            <person name="Ring B.Z."/>
            <person name="Ringwald M."/>
            <person name="Rost B."/>
            <person name="Ruan Y."/>
            <person name="Salzberg S.L."/>
            <person name="Sandelin A."/>
            <person name="Schneider C."/>
            <person name="Schoenbach C."/>
            <person name="Sekiguchi K."/>
            <person name="Semple C.A."/>
            <person name="Seno S."/>
            <person name="Sessa L."/>
            <person name="Sheng Y."/>
            <person name="Shibata Y."/>
            <person name="Shimada H."/>
            <person name="Shimada K."/>
            <person name="Silva D."/>
            <person name="Sinclair B."/>
            <person name="Sperling S."/>
            <person name="Stupka E."/>
            <person name="Sugiura K."/>
            <person name="Sultana R."/>
            <person name="Takenaka Y."/>
            <person name="Taki K."/>
            <person name="Tammoja K."/>
            <person name="Tan S.L."/>
            <person name="Tang S."/>
            <person name="Taylor M.S."/>
            <person name="Tegner J."/>
            <person name="Teichmann S.A."/>
            <person name="Ueda H.R."/>
            <person name="van Nimwegen E."/>
            <person name="Verardo R."/>
            <person name="Wei C.L."/>
            <person name="Yagi K."/>
            <person name="Yamanishi H."/>
            <person name="Zabarovsky E."/>
            <person name="Zhu S."/>
            <person name="Zimmer A."/>
            <person name="Hide W."/>
            <person name="Bult C."/>
            <person name="Grimmond S.M."/>
            <person name="Teasdale R.D."/>
            <person name="Liu E.T."/>
            <person name="Brusic V."/>
            <person name="Quackenbush J."/>
            <person name="Wahlestedt C."/>
            <person name="Mattick J.S."/>
            <person name="Hume D.A."/>
            <person name="Kai C."/>
            <person name="Sasaki D."/>
            <person name="Tomaru Y."/>
            <person name="Fukuda S."/>
            <person name="Kanamori-Katayama M."/>
            <person name="Suzuki M."/>
            <person name="Aoki J."/>
            <person name="Arakawa T."/>
            <person name="Iida J."/>
            <person name="Imamura K."/>
            <person name="Itoh M."/>
            <person name="Kato T."/>
            <person name="Kawaji H."/>
            <person name="Kawagashira N."/>
            <person name="Kawashima T."/>
            <person name="Kojima M."/>
            <person name="Kondo S."/>
            <person name="Konno H."/>
            <person name="Nakano K."/>
            <person name="Ninomiya N."/>
            <person name="Nishio T."/>
            <person name="Okada M."/>
            <person name="Plessy C."/>
            <person name="Shibata K."/>
            <person name="Shiraki T."/>
            <person name="Suzuki S."/>
            <person name="Tagami M."/>
            <person name="Waki K."/>
            <person name="Watahiki A."/>
            <person name="Okamura-Oho Y."/>
            <person name="Suzuki H."/>
            <person name="Kawai J."/>
            <person name="Hayashizaki Y."/>
        </authorList>
    </citation>
    <scope>NUCLEOTIDE SEQUENCE [LARGE SCALE MRNA]</scope>
    <source>
        <strain>C57BL/6J</strain>
    </source>
</reference>
<reference key="2">
    <citation type="journal article" date="2004" name="Genome Res.">
        <title>The status, quality, and expansion of the NIH full-length cDNA project: the Mammalian Gene Collection (MGC).</title>
        <authorList>
            <consortium name="The MGC Project Team"/>
        </authorList>
    </citation>
    <scope>NUCLEOTIDE SEQUENCE [LARGE SCALE MRNA]</scope>
</reference>
<reference key="3">
    <citation type="journal article" date="2010" name="Cell">
        <title>A tissue-specific atlas of mouse protein phosphorylation and expression.</title>
        <authorList>
            <person name="Huttlin E.L."/>
            <person name="Jedrychowski M.P."/>
            <person name="Elias J.E."/>
            <person name="Goswami T."/>
            <person name="Rad R."/>
            <person name="Beausoleil S.A."/>
            <person name="Villen J."/>
            <person name="Haas W."/>
            <person name="Sowa M.E."/>
            <person name="Gygi S.P."/>
        </authorList>
    </citation>
    <scope>IDENTIFICATION BY MASS SPECTROMETRY [LARGE SCALE ANALYSIS]</scope>
    <source>
        <tissue>Testis</tissue>
    </source>
</reference>
<reference key="4">
    <citation type="journal article" date="2011" name="Cell">
        <title>Role for Dpy-30 in ES cell-fate specification by regulation of H3K4 methylation within bivalent domains.</title>
        <authorList>
            <person name="Jiang H."/>
            <person name="Shukla A."/>
            <person name="Wang X."/>
            <person name="Chen W.Y."/>
            <person name="Bernstein B.E."/>
            <person name="Roeder R.G."/>
        </authorList>
    </citation>
    <scope>FUNCTION</scope>
    <scope>IDENTIFICATION IN THE MLL COMPLEX</scope>
    <scope>INTERACTION WITH ASH2L; KMT2A; KMT2D; RRBP5 AND WDR5</scope>
    <scope>SUBCELLULAR LOCATION</scope>
</reference>
<accession>Q99LT0</accession>
<sequence>MESEQMLEGQTQVAENPHSEYGLTDSVERIVENEKINAEKSSKQKVDLQSLPTRAYLDQTVVPILLQGLAVLAKERPPNPIEFLASYLLKNKAQFEDRN</sequence>
<proteinExistence type="evidence at protein level"/>
<protein>
    <recommendedName>
        <fullName>Protein dpy-30 homolog</fullName>
    </recommendedName>
    <alternativeName>
        <fullName>Dpy-30-like protein</fullName>
        <shortName>Dpy-30L</shortName>
    </alternativeName>
</protein>
<feature type="chain" id="PRO_0000114684" description="Protein dpy-30 homolog">
    <location>
        <begin position="1"/>
        <end position="99"/>
    </location>
</feature>
<feature type="region of interest" description="Disordered" evidence="3">
    <location>
        <begin position="1"/>
        <end position="26"/>
    </location>
</feature>
<feature type="modified residue" description="N-acetylmethionine" evidence="2">
    <location>
        <position position="1"/>
    </location>
</feature>
<feature type="modified residue" description="Phosphoserine" evidence="2">
    <location>
        <position position="19"/>
    </location>
</feature>
<feature type="modified residue" description="N6-acetyllysine; alternate" evidence="2">
    <location>
        <position position="35"/>
    </location>
</feature>
<feature type="cross-link" description="Glycyl lysine isopeptide (Lys-Gly) (interchain with G-Cter in SUMO2); alternate" evidence="2">
    <location>
        <position position="35"/>
    </location>
</feature>
<evidence type="ECO:0000250" key="1"/>
<evidence type="ECO:0000250" key="2">
    <source>
        <dbReference type="UniProtKB" id="Q9C005"/>
    </source>
</evidence>
<evidence type="ECO:0000256" key="3">
    <source>
        <dbReference type="SAM" id="MobiDB-lite"/>
    </source>
</evidence>
<evidence type="ECO:0000269" key="4">
    <source>
    </source>
</evidence>
<evidence type="ECO:0000305" key="5"/>
<comment type="function">
    <text evidence="4">As part of the MLL1/MLL complex, involved in the methylation of histone H3 at 'Lys-4', particularly trimethylation. Histone H3 'Lys-4' methylation represents a specific tag for epigenetic transcriptional activation. May play some role in histone H3 acetylation. In embryonic stem (ES) cells, plays a crucial role in the differentiation potential, particularly along the neural lineage, regulating gene induction and histone H3 'Lys-4' methylation at key developmental loci, including that mediated by retinoic acid. Does not affect ES cell self-renewal. May also play an indirect or direct role in endosomal transport.</text>
</comment>
<comment type="subunit">
    <text evidence="1">Homodimer. Core component of several methyltransferase-containing complexes including MLL1/MLL, MLL2/3 (also named ASCOM complex) and MLL4/WBP7. Each complex is at least composed of ASH2L, RBBP5, WDR5, DPY30, one or more specific histone methyltransferases (KMT2A/MLL1, KMT2D/MLL2, KMT2C/MLL3 and KMT2B/MLL4), and the facultative components MEN1, HCFC1, HCFC2, NCOA6, KDM6A, PAXIP1/PTIP, PAGR1 and alpha- and beta-tubulin PAXIP1/PTIP, PAGR1 and alpha- and beta-tubulin. Interacts with ASH2L. The interaction with ASH2L is direct (By similarity). Interacts with ARFGEF1 (By similarity). Component of the SET1 complex, at least composed of the catalytic subunit (SETD1A or SETD1B), WDR5, WDR82, RBBP5, ASH2L/ASH2, CXXC1/CFP1, HCFC1 and DPY30 (By similarity).</text>
</comment>
<comment type="subcellular location">
    <subcellularLocation>
        <location evidence="4">Nucleus</location>
    </subcellularLocation>
    <subcellularLocation>
        <location evidence="1">Golgi apparatus</location>
        <location evidence="1">trans-Golgi network</location>
    </subcellularLocation>
    <text>Associated with chromatin at regions enriched in histone H3 trimethylated at 'Lys-4'. Highly enriched in gene promoter regions and 5' UTRs, but not in downstream regions of genes or 3' UTRs.</text>
</comment>
<comment type="similarity">
    <text evidence="5">Belongs to the dpy-30 family.</text>
</comment>
<name>DPY30_MOUSE</name>
<keyword id="KW-0007">Acetylation</keyword>
<keyword id="KW-0156">Chromatin regulator</keyword>
<keyword id="KW-0333">Golgi apparatus</keyword>
<keyword id="KW-1017">Isopeptide bond</keyword>
<keyword id="KW-0539">Nucleus</keyword>
<keyword id="KW-0597">Phosphoprotein</keyword>
<keyword id="KW-1185">Reference proteome</keyword>
<keyword id="KW-0804">Transcription</keyword>
<keyword id="KW-0805">Transcription regulation</keyword>
<keyword id="KW-0832">Ubl conjugation</keyword>